<name>EFPL_SALTY</name>
<proteinExistence type="inferred from homology"/>
<comment type="similarity">
    <text evidence="1">Belongs to the elongation factor P family.</text>
</comment>
<comment type="sequence caution" evidence="2">
    <conflict type="erroneous initiation">
        <sequence resource="EMBL-CDS" id="AAL21114"/>
    </conflict>
</comment>
<reference key="1">
    <citation type="journal article" date="2001" name="Nature">
        <title>Complete genome sequence of Salmonella enterica serovar Typhimurium LT2.</title>
        <authorList>
            <person name="McClelland M."/>
            <person name="Sanderson K.E."/>
            <person name="Spieth J."/>
            <person name="Clifton S.W."/>
            <person name="Latreille P."/>
            <person name="Courtney L."/>
            <person name="Porwollik S."/>
            <person name="Ali J."/>
            <person name="Dante M."/>
            <person name="Du F."/>
            <person name="Hou S."/>
            <person name="Layman D."/>
            <person name="Leonard S."/>
            <person name="Nguyen C."/>
            <person name="Scott K."/>
            <person name="Holmes A."/>
            <person name="Grewal N."/>
            <person name="Mulvaney E."/>
            <person name="Ryan E."/>
            <person name="Sun H."/>
            <person name="Florea L."/>
            <person name="Miller W."/>
            <person name="Stoneking T."/>
            <person name="Nhan M."/>
            <person name="Waterston R."/>
            <person name="Wilson R.K."/>
        </authorList>
    </citation>
    <scope>NUCLEOTIDE SEQUENCE [LARGE SCALE GENOMIC DNA]</scope>
    <source>
        <strain>LT2 / SGSC1412 / ATCC 700720</strain>
    </source>
</reference>
<keyword id="KW-1185">Reference proteome</keyword>
<evidence type="ECO:0000255" key="1">
    <source>
        <dbReference type="HAMAP-Rule" id="MF_00646"/>
    </source>
</evidence>
<evidence type="ECO:0000305" key="2"/>
<sequence length="190" mass="21386">MPRANEIKKGMVLNYNGKLLIVKDIDIQSPTARGAATLYKMRFSDVRTGLKVEERFKGDDIVDTVTLSRRGVDFSYVDGNEYVFMDKEDYTPYTFTKDQIEEELLFMPEGGMPDMQVLTWDGQLLALELPQTVDLEIVETAPGIKGASASARNKPATLSTGLVIQVPEYLSAGEKIRIHIEERRYMGRAD</sequence>
<organism>
    <name type="scientific">Salmonella typhimurium (strain LT2 / SGSC1412 / ATCC 700720)</name>
    <dbReference type="NCBI Taxonomy" id="99287"/>
    <lineage>
        <taxon>Bacteria</taxon>
        <taxon>Pseudomonadati</taxon>
        <taxon>Pseudomonadota</taxon>
        <taxon>Gammaproteobacteria</taxon>
        <taxon>Enterobacterales</taxon>
        <taxon>Enterobacteriaceae</taxon>
        <taxon>Salmonella</taxon>
    </lineage>
</organism>
<dbReference type="EMBL" id="AE006468">
    <property type="protein sequence ID" value="AAL21114.1"/>
    <property type="status" value="ALT_INIT"/>
    <property type="molecule type" value="Genomic_DNA"/>
</dbReference>
<dbReference type="RefSeq" id="NP_461155.3">
    <property type="nucleotide sequence ID" value="NC_003197.2"/>
</dbReference>
<dbReference type="RefSeq" id="WP_014344509.1">
    <property type="nucleotide sequence ID" value="NC_003197.2"/>
</dbReference>
<dbReference type="SMR" id="P64046"/>
<dbReference type="STRING" id="99287.STM2211"/>
<dbReference type="PaxDb" id="99287-STM2211"/>
<dbReference type="GeneID" id="1253733"/>
<dbReference type="KEGG" id="stm:STM2211"/>
<dbReference type="PATRIC" id="fig|99287.12.peg.2342"/>
<dbReference type="HOGENOM" id="CLU_074944_2_0_6"/>
<dbReference type="PhylomeDB" id="P64046"/>
<dbReference type="Proteomes" id="UP000001014">
    <property type="component" value="Chromosome"/>
</dbReference>
<dbReference type="GO" id="GO:0005737">
    <property type="term" value="C:cytoplasm"/>
    <property type="evidence" value="ECO:0000318"/>
    <property type="project" value="GO_Central"/>
</dbReference>
<dbReference type="GO" id="GO:0005829">
    <property type="term" value="C:cytosol"/>
    <property type="evidence" value="ECO:0007669"/>
    <property type="project" value="UniProtKB-ARBA"/>
</dbReference>
<dbReference type="GO" id="GO:0003746">
    <property type="term" value="F:translation elongation factor activity"/>
    <property type="evidence" value="ECO:0000318"/>
    <property type="project" value="GO_Central"/>
</dbReference>
<dbReference type="GO" id="GO:0043043">
    <property type="term" value="P:peptide biosynthetic process"/>
    <property type="evidence" value="ECO:0007669"/>
    <property type="project" value="InterPro"/>
</dbReference>
<dbReference type="CDD" id="cd04470">
    <property type="entry name" value="S1_EF-P_repeat_1"/>
    <property type="match status" value="1"/>
</dbReference>
<dbReference type="CDD" id="cd05794">
    <property type="entry name" value="S1_EF-P_repeat_2"/>
    <property type="match status" value="1"/>
</dbReference>
<dbReference type="FunFam" id="2.40.50.140:FF:000004">
    <property type="entry name" value="Elongation factor P"/>
    <property type="match status" value="1"/>
</dbReference>
<dbReference type="FunFam" id="2.30.30.30:FF:000011">
    <property type="entry name" value="Elongation factor P-like protein"/>
    <property type="match status" value="1"/>
</dbReference>
<dbReference type="FunFam" id="2.40.50.140:FF:000053">
    <property type="entry name" value="Elongation factor P-like protein"/>
    <property type="match status" value="1"/>
</dbReference>
<dbReference type="Gene3D" id="2.30.30.30">
    <property type="match status" value="1"/>
</dbReference>
<dbReference type="Gene3D" id="2.40.50.140">
    <property type="entry name" value="Nucleic acid-binding proteins"/>
    <property type="match status" value="2"/>
</dbReference>
<dbReference type="HAMAP" id="MF_00646">
    <property type="entry name" value="EFP"/>
    <property type="match status" value="1"/>
</dbReference>
<dbReference type="InterPro" id="IPR015365">
    <property type="entry name" value="Elong-fact-P_C"/>
</dbReference>
<dbReference type="InterPro" id="IPR012340">
    <property type="entry name" value="NA-bd_OB-fold"/>
</dbReference>
<dbReference type="InterPro" id="IPR014722">
    <property type="entry name" value="Rib_uL2_dom2"/>
</dbReference>
<dbReference type="InterPro" id="IPR020599">
    <property type="entry name" value="Transl_elong_fac_P/YeiP"/>
</dbReference>
<dbReference type="InterPro" id="IPR013185">
    <property type="entry name" value="Transl_elong_KOW-like"/>
</dbReference>
<dbReference type="InterPro" id="IPR011897">
    <property type="entry name" value="Transl_elong_p-like_YeiP"/>
</dbReference>
<dbReference type="InterPro" id="IPR001059">
    <property type="entry name" value="Transl_elong_P/YeiP_cen"/>
</dbReference>
<dbReference type="InterPro" id="IPR013852">
    <property type="entry name" value="Transl_elong_P/YeiP_CS"/>
</dbReference>
<dbReference type="InterPro" id="IPR008991">
    <property type="entry name" value="Translation_prot_SH3-like_sf"/>
</dbReference>
<dbReference type="NCBIfam" id="NF001810">
    <property type="entry name" value="PRK00529.1"/>
    <property type="match status" value="1"/>
</dbReference>
<dbReference type="NCBIfam" id="NF003392">
    <property type="entry name" value="PRK04542.1"/>
    <property type="match status" value="1"/>
</dbReference>
<dbReference type="NCBIfam" id="TIGR02178">
    <property type="entry name" value="yeiP"/>
    <property type="match status" value="1"/>
</dbReference>
<dbReference type="PANTHER" id="PTHR30053">
    <property type="entry name" value="ELONGATION FACTOR P"/>
    <property type="match status" value="1"/>
</dbReference>
<dbReference type="PANTHER" id="PTHR30053:SF14">
    <property type="entry name" value="TRANSLATION ELONGATION FACTOR KOW-LIKE DOMAIN-CONTAINING PROTEIN"/>
    <property type="match status" value="1"/>
</dbReference>
<dbReference type="Pfam" id="PF01132">
    <property type="entry name" value="EFP"/>
    <property type="match status" value="1"/>
</dbReference>
<dbReference type="Pfam" id="PF08207">
    <property type="entry name" value="EFP_N"/>
    <property type="match status" value="1"/>
</dbReference>
<dbReference type="Pfam" id="PF09285">
    <property type="entry name" value="Elong-fact-P_C"/>
    <property type="match status" value="1"/>
</dbReference>
<dbReference type="PIRSF" id="PIRSF005901">
    <property type="entry name" value="EF-P"/>
    <property type="match status" value="1"/>
</dbReference>
<dbReference type="SMART" id="SM01185">
    <property type="entry name" value="EFP"/>
    <property type="match status" value="1"/>
</dbReference>
<dbReference type="SMART" id="SM00841">
    <property type="entry name" value="Elong-fact-P_C"/>
    <property type="match status" value="1"/>
</dbReference>
<dbReference type="SUPFAM" id="SSF50249">
    <property type="entry name" value="Nucleic acid-binding proteins"/>
    <property type="match status" value="2"/>
</dbReference>
<dbReference type="SUPFAM" id="SSF50104">
    <property type="entry name" value="Translation proteins SH3-like domain"/>
    <property type="match status" value="1"/>
</dbReference>
<dbReference type="PROSITE" id="PS01275">
    <property type="entry name" value="EFP"/>
    <property type="match status" value="1"/>
</dbReference>
<protein>
    <recommendedName>
        <fullName evidence="1">Elongation factor P-like protein</fullName>
    </recommendedName>
</protein>
<gene>
    <name evidence="1" type="primary">yeiP</name>
    <name type="ordered locus">STM2211</name>
</gene>
<accession>P64046</accession>
<accession>Q8ZNK3</accession>
<feature type="chain" id="PRO_0000094387" description="Elongation factor P-like protein">
    <location>
        <begin position="1"/>
        <end position="190"/>
    </location>
</feature>